<gene>
    <name evidence="2" type="primary">atpA</name>
</gene>
<evidence type="ECO:0000250" key="1"/>
<evidence type="ECO:0000255" key="2">
    <source>
        <dbReference type="HAMAP-Rule" id="MF_01346"/>
    </source>
</evidence>
<organism>
    <name type="scientific">Cyanophora paradoxa</name>
    <dbReference type="NCBI Taxonomy" id="2762"/>
    <lineage>
        <taxon>Eukaryota</taxon>
        <taxon>Glaucocystophyceae</taxon>
        <taxon>Cyanophoraceae</taxon>
        <taxon>Cyanophora</taxon>
    </lineage>
</organism>
<protein>
    <recommendedName>
        <fullName evidence="2">ATP synthase subunit alpha, cyanelle</fullName>
        <ecNumber evidence="2">7.1.2.2</ecNumber>
    </recommendedName>
    <alternativeName>
        <fullName evidence="2">ATP synthase F1 sector subunit alpha</fullName>
    </alternativeName>
    <alternativeName>
        <fullName evidence="2">F-ATPase subunit alpha</fullName>
    </alternativeName>
</protein>
<accession>P48080</accession>
<proteinExistence type="inferred from homology"/>
<feature type="chain" id="PRO_0000144366" description="ATP synthase subunit alpha, cyanelle">
    <location>
        <begin position="1"/>
        <end position="505"/>
    </location>
</feature>
<feature type="binding site" evidence="2">
    <location>
        <begin position="170"/>
        <end position="177"/>
    </location>
    <ligand>
        <name>ATP</name>
        <dbReference type="ChEBI" id="CHEBI:30616"/>
    </ligand>
</feature>
<feature type="site" description="Required for activity" evidence="2">
    <location>
        <position position="363"/>
    </location>
</feature>
<sequence>MVSIRPDEISSIIRQQIEQYDQEIQVSNVGTVLQVGDGIARVYGLDKVMSGELLEFEDGTIGIALNLEADNVGVVLMGDGRNILEGSSVRATQKIAQVPVGDAVIGRVVDALARPIDGKGDIATTDTRLIESSAPGIISRKFVYEPLQTGITAIDAMIPIPRGQRELIIGDRQTGKTAVAIDTILNQKGQGVVCVYVAIGQKASSVAQVVGVLQEKGALDYTVIVAANADDPATLQYLAPYTGASIAEYFMYKGQHTLVIYDDLSKQAQAYRQMSLLLRRPPGREAYPGDVFYLHSRLLERAAKLSPQLGEGSMTALPIVETQAGDVCAYIPTNVISITDGQIFLSADLFNSGLRPAINVGISVSRVGSAAQIKAMKQVAGKLKLELAQFDELKAFSQFSSDLDKATQLQLARGERLRELLKQQQYAPLPVEEQVAVIYTGINGFLDNIETKQVSAFISNLRENLSVKRAKFGEIIRSEKALTAEAENLLKDAISDCKQAFLSNI</sequence>
<comment type="function">
    <text evidence="2">Produces ATP from ADP in the presence of a proton gradient across the membrane. The alpha chain is a regulatory subunit.</text>
</comment>
<comment type="catalytic activity">
    <reaction evidence="2">
        <text>ATP + H2O + 4 H(+)(in) = ADP + phosphate + 5 H(+)(out)</text>
        <dbReference type="Rhea" id="RHEA:57720"/>
        <dbReference type="ChEBI" id="CHEBI:15377"/>
        <dbReference type="ChEBI" id="CHEBI:15378"/>
        <dbReference type="ChEBI" id="CHEBI:30616"/>
        <dbReference type="ChEBI" id="CHEBI:43474"/>
        <dbReference type="ChEBI" id="CHEBI:456216"/>
        <dbReference type="EC" id="7.1.2.2"/>
    </reaction>
</comment>
<comment type="subunit">
    <text evidence="2">F-type ATPases have 2 components, CF(1) - the catalytic core - and CF(0) - the membrane proton channel. CF(1) has five subunits: alpha(3), beta(3), gamma(1), delta(1), epsilon(1). CF(0) has four main subunits: a, b, b' and c.</text>
</comment>
<comment type="subcellular location">
    <subcellularLocation>
        <location evidence="1">Plastid</location>
        <location evidence="1">Cyanelle thylakoid membrane</location>
        <topology evidence="2">Peripheral membrane protein</topology>
    </subcellularLocation>
</comment>
<comment type="similarity">
    <text evidence="2">Belongs to the ATPase alpha/beta chains family.</text>
</comment>
<reference key="1">
    <citation type="journal article" date="1995" name="Plant Mol. Biol. Rep.">
        <title>Nucleotide sequence of the cyanelle DNA from Cyanophora paradoxa.</title>
        <authorList>
            <person name="Stirewalt V.L."/>
            <person name="Michalowski C.B."/>
            <person name="Loeffelhardt W."/>
            <person name="Bohnert H.J."/>
            <person name="Bryant D.A."/>
        </authorList>
    </citation>
    <scope>NUCLEOTIDE SEQUENCE [LARGE SCALE GENOMIC DNA]</scope>
    <source>
        <strain>UTEX LB 555 / Pringsheim</strain>
    </source>
</reference>
<reference key="2">
    <citation type="book" date="1997" name="Eukaryotism and symbiosis">
        <title>The complete sequence of the cyanelle genome of Cyanophora paradoxa: the genetic complexity of a primitive plastid.</title>
        <editorList>
            <person name="Schenk H.E.A."/>
            <person name="Herrmann R."/>
            <person name="Jeon K.W."/>
            <person name="Mueller N.E."/>
            <person name="Schwemmler W."/>
        </editorList>
        <authorList>
            <person name="Loeffelhardt W."/>
            <person name="Stirewalt V.L."/>
            <person name="Michalowski C.B."/>
            <person name="Annarella M."/>
            <person name="Farley J.Y."/>
            <person name="Schluchter W.M."/>
            <person name="Chung S."/>
            <person name="Newmann-Spallart C."/>
            <person name="Steiner J.M."/>
            <person name="Jakowitsch J."/>
            <person name="Bohnert H.J."/>
            <person name="Bryant D.A."/>
        </authorList>
    </citation>
    <scope>NUCLEOTIDE SEQUENCE [LARGE SCALE GENOMIC DNA]</scope>
    <source>
        <strain>UTEX LB 555 / Pringsheim</strain>
    </source>
</reference>
<name>ATPA_CYAPA</name>
<dbReference type="EC" id="7.1.2.2" evidence="2"/>
<dbReference type="EMBL" id="U30821">
    <property type="protein sequence ID" value="AAA81253.1"/>
    <property type="molecule type" value="Genomic_DNA"/>
</dbReference>
<dbReference type="PIR" id="T06910">
    <property type="entry name" value="T06910"/>
</dbReference>
<dbReference type="RefSeq" id="NP_043222.1">
    <property type="nucleotide sequence ID" value="NC_001675.1"/>
</dbReference>
<dbReference type="SMR" id="P48080"/>
<dbReference type="GeneID" id="801568"/>
<dbReference type="GO" id="GO:0033115">
    <property type="term" value="C:cyanelle thylakoid membrane"/>
    <property type="evidence" value="ECO:0007669"/>
    <property type="project" value="UniProtKB-SubCell"/>
</dbReference>
<dbReference type="GO" id="GO:0045259">
    <property type="term" value="C:proton-transporting ATP synthase complex"/>
    <property type="evidence" value="ECO:0007669"/>
    <property type="project" value="UniProtKB-KW"/>
</dbReference>
<dbReference type="GO" id="GO:0043531">
    <property type="term" value="F:ADP binding"/>
    <property type="evidence" value="ECO:0007669"/>
    <property type="project" value="TreeGrafter"/>
</dbReference>
<dbReference type="GO" id="GO:0005524">
    <property type="term" value="F:ATP binding"/>
    <property type="evidence" value="ECO:0007669"/>
    <property type="project" value="UniProtKB-KW"/>
</dbReference>
<dbReference type="GO" id="GO:0046933">
    <property type="term" value="F:proton-transporting ATP synthase activity, rotational mechanism"/>
    <property type="evidence" value="ECO:0007669"/>
    <property type="project" value="InterPro"/>
</dbReference>
<dbReference type="CDD" id="cd18113">
    <property type="entry name" value="ATP-synt_F1_alpha_C"/>
    <property type="match status" value="1"/>
</dbReference>
<dbReference type="CDD" id="cd18116">
    <property type="entry name" value="ATP-synt_F1_alpha_N"/>
    <property type="match status" value="1"/>
</dbReference>
<dbReference type="CDD" id="cd01132">
    <property type="entry name" value="F1-ATPase_alpha_CD"/>
    <property type="match status" value="1"/>
</dbReference>
<dbReference type="FunFam" id="1.20.150.20:FF:000001">
    <property type="entry name" value="ATP synthase subunit alpha"/>
    <property type="match status" value="1"/>
</dbReference>
<dbReference type="FunFam" id="2.40.30.20:FF:000001">
    <property type="entry name" value="ATP synthase subunit alpha"/>
    <property type="match status" value="1"/>
</dbReference>
<dbReference type="FunFam" id="3.40.50.300:FF:000002">
    <property type="entry name" value="ATP synthase subunit alpha"/>
    <property type="match status" value="1"/>
</dbReference>
<dbReference type="Gene3D" id="2.40.30.20">
    <property type="match status" value="1"/>
</dbReference>
<dbReference type="Gene3D" id="1.20.150.20">
    <property type="entry name" value="ATP synthase alpha/beta chain, C-terminal domain"/>
    <property type="match status" value="1"/>
</dbReference>
<dbReference type="Gene3D" id="3.40.50.300">
    <property type="entry name" value="P-loop containing nucleotide triphosphate hydrolases"/>
    <property type="match status" value="1"/>
</dbReference>
<dbReference type="HAMAP" id="MF_01346">
    <property type="entry name" value="ATP_synth_alpha_bact"/>
    <property type="match status" value="1"/>
</dbReference>
<dbReference type="InterPro" id="IPR023366">
    <property type="entry name" value="ATP_synth_asu-like_sf"/>
</dbReference>
<dbReference type="InterPro" id="IPR000793">
    <property type="entry name" value="ATP_synth_asu_C"/>
</dbReference>
<dbReference type="InterPro" id="IPR038376">
    <property type="entry name" value="ATP_synth_asu_C_sf"/>
</dbReference>
<dbReference type="InterPro" id="IPR033732">
    <property type="entry name" value="ATP_synth_F1_a_nt-bd_dom"/>
</dbReference>
<dbReference type="InterPro" id="IPR005294">
    <property type="entry name" value="ATP_synth_F1_asu"/>
</dbReference>
<dbReference type="InterPro" id="IPR020003">
    <property type="entry name" value="ATPase_a/bsu_AS"/>
</dbReference>
<dbReference type="InterPro" id="IPR004100">
    <property type="entry name" value="ATPase_F1/V1/A1_a/bsu_N"/>
</dbReference>
<dbReference type="InterPro" id="IPR036121">
    <property type="entry name" value="ATPase_F1/V1/A1_a/bsu_N_sf"/>
</dbReference>
<dbReference type="InterPro" id="IPR000194">
    <property type="entry name" value="ATPase_F1/V1/A1_a/bsu_nucl-bd"/>
</dbReference>
<dbReference type="InterPro" id="IPR027417">
    <property type="entry name" value="P-loop_NTPase"/>
</dbReference>
<dbReference type="NCBIfam" id="TIGR00962">
    <property type="entry name" value="atpA"/>
    <property type="match status" value="1"/>
</dbReference>
<dbReference type="NCBIfam" id="NF009884">
    <property type="entry name" value="PRK13343.1"/>
    <property type="match status" value="1"/>
</dbReference>
<dbReference type="PANTHER" id="PTHR48082">
    <property type="entry name" value="ATP SYNTHASE SUBUNIT ALPHA, MITOCHONDRIAL"/>
    <property type="match status" value="1"/>
</dbReference>
<dbReference type="PANTHER" id="PTHR48082:SF2">
    <property type="entry name" value="ATP SYNTHASE SUBUNIT ALPHA, MITOCHONDRIAL"/>
    <property type="match status" value="1"/>
</dbReference>
<dbReference type="Pfam" id="PF00006">
    <property type="entry name" value="ATP-synt_ab"/>
    <property type="match status" value="1"/>
</dbReference>
<dbReference type="Pfam" id="PF00306">
    <property type="entry name" value="ATP-synt_ab_C"/>
    <property type="match status" value="1"/>
</dbReference>
<dbReference type="Pfam" id="PF02874">
    <property type="entry name" value="ATP-synt_ab_N"/>
    <property type="match status" value="1"/>
</dbReference>
<dbReference type="PIRSF" id="PIRSF039088">
    <property type="entry name" value="F_ATPase_subunit_alpha"/>
    <property type="match status" value="1"/>
</dbReference>
<dbReference type="SUPFAM" id="SSF47917">
    <property type="entry name" value="C-terminal domain of alpha and beta subunits of F1 ATP synthase"/>
    <property type="match status" value="1"/>
</dbReference>
<dbReference type="SUPFAM" id="SSF50615">
    <property type="entry name" value="N-terminal domain of alpha and beta subunits of F1 ATP synthase"/>
    <property type="match status" value="1"/>
</dbReference>
<dbReference type="SUPFAM" id="SSF52540">
    <property type="entry name" value="P-loop containing nucleoside triphosphate hydrolases"/>
    <property type="match status" value="1"/>
</dbReference>
<dbReference type="PROSITE" id="PS00152">
    <property type="entry name" value="ATPASE_ALPHA_BETA"/>
    <property type="match status" value="1"/>
</dbReference>
<keyword id="KW-0066">ATP synthesis</keyword>
<keyword id="KW-0067">ATP-binding</keyword>
<keyword id="KW-0139">CF(1)</keyword>
<keyword id="KW-0194">Cyanelle</keyword>
<keyword id="KW-0375">Hydrogen ion transport</keyword>
<keyword id="KW-0406">Ion transport</keyword>
<keyword id="KW-0472">Membrane</keyword>
<keyword id="KW-0547">Nucleotide-binding</keyword>
<keyword id="KW-0934">Plastid</keyword>
<keyword id="KW-0793">Thylakoid</keyword>
<keyword id="KW-1278">Translocase</keyword>
<keyword id="KW-0813">Transport</keyword>
<geneLocation type="cyanelle"/>